<dbReference type="EC" id="3.5.1.3" evidence="1"/>
<dbReference type="EMBL" id="BC071039">
    <property type="protein sequence ID" value="AAH71039.1"/>
    <property type="molecule type" value="mRNA"/>
</dbReference>
<dbReference type="RefSeq" id="NP_001090454.1">
    <property type="nucleotide sequence ID" value="NM_001096985.1"/>
</dbReference>
<dbReference type="SMR" id="Q6IR61"/>
<dbReference type="DNASU" id="779367"/>
<dbReference type="AGR" id="Xenbase:XB-GENE-6252452"/>
<dbReference type="Proteomes" id="UP000186698">
    <property type="component" value="Unplaced"/>
</dbReference>
<dbReference type="Bgee" id="779367">
    <property type="expression patterns" value="Expressed in kidney and 19 other cell types or tissues"/>
</dbReference>
<dbReference type="GO" id="GO:0005739">
    <property type="term" value="C:mitochondrion"/>
    <property type="evidence" value="ECO:0007669"/>
    <property type="project" value="TreeGrafter"/>
</dbReference>
<dbReference type="GO" id="GO:0106008">
    <property type="term" value="F:2-oxoglutaramate amidase activity"/>
    <property type="evidence" value="ECO:0007669"/>
    <property type="project" value="RHEA"/>
</dbReference>
<dbReference type="GO" id="GO:0050152">
    <property type="term" value="F:omega-amidase activity"/>
    <property type="evidence" value="ECO:0000318"/>
    <property type="project" value="GO_Central"/>
</dbReference>
<dbReference type="GO" id="GO:0006528">
    <property type="term" value="P:asparagine metabolic process"/>
    <property type="evidence" value="ECO:0000318"/>
    <property type="project" value="GO_Central"/>
</dbReference>
<dbReference type="GO" id="GO:0006541">
    <property type="term" value="P:glutamine metabolic process"/>
    <property type="evidence" value="ECO:0000318"/>
    <property type="project" value="GO_Central"/>
</dbReference>
<dbReference type="GO" id="GO:0006107">
    <property type="term" value="P:oxaloacetate metabolic process"/>
    <property type="evidence" value="ECO:0000318"/>
    <property type="project" value="GO_Central"/>
</dbReference>
<dbReference type="CDD" id="cd07572">
    <property type="entry name" value="nit"/>
    <property type="match status" value="1"/>
</dbReference>
<dbReference type="FunFam" id="3.60.110.10:FF:000002">
    <property type="entry name" value="Nitrilase family member 2"/>
    <property type="match status" value="1"/>
</dbReference>
<dbReference type="Gene3D" id="3.60.110.10">
    <property type="entry name" value="Carbon-nitrogen hydrolase"/>
    <property type="match status" value="1"/>
</dbReference>
<dbReference type="InterPro" id="IPR003010">
    <property type="entry name" value="C-N_Hydrolase"/>
</dbReference>
<dbReference type="InterPro" id="IPR036526">
    <property type="entry name" value="C-N_Hydrolase_sf"/>
</dbReference>
<dbReference type="InterPro" id="IPR045254">
    <property type="entry name" value="Nit1/2_C-N_Hydrolase"/>
</dbReference>
<dbReference type="PANTHER" id="PTHR23088">
    <property type="entry name" value="NITRILASE-RELATED"/>
    <property type="match status" value="1"/>
</dbReference>
<dbReference type="PANTHER" id="PTHR23088:SF30">
    <property type="entry name" value="OMEGA-AMIDASE NIT2"/>
    <property type="match status" value="1"/>
</dbReference>
<dbReference type="Pfam" id="PF00795">
    <property type="entry name" value="CN_hydrolase"/>
    <property type="match status" value="1"/>
</dbReference>
<dbReference type="SUPFAM" id="SSF56317">
    <property type="entry name" value="Carbon-nitrogen hydrolase"/>
    <property type="match status" value="1"/>
</dbReference>
<dbReference type="PROSITE" id="PS50263">
    <property type="entry name" value="CN_HYDROLASE"/>
    <property type="match status" value="1"/>
</dbReference>
<evidence type="ECO:0000250" key="1">
    <source>
        <dbReference type="UniProtKB" id="Q9NQR4"/>
    </source>
</evidence>
<evidence type="ECO:0000255" key="2">
    <source>
        <dbReference type="PROSITE-ProRule" id="PRU00054"/>
    </source>
</evidence>
<evidence type="ECO:0000305" key="3"/>
<gene>
    <name type="primary">nit2a</name>
</gene>
<comment type="function">
    <text evidence="1">Has omega-amidase activity. The role of omega-amidase is to remove potentially toxic intermediates by converting 2-oxoglutaramate and 2-oxosuccinamate to biologically useful 2-oxoglutarate and oxaloacetate, respectively.</text>
</comment>
<comment type="catalytic activity">
    <reaction evidence="1">
        <text>2-oxoglutaramate + H2O = 2-oxoglutarate + NH4(+)</text>
        <dbReference type="Rhea" id="RHEA:32963"/>
        <dbReference type="ChEBI" id="CHEBI:15377"/>
        <dbReference type="ChEBI" id="CHEBI:16769"/>
        <dbReference type="ChEBI" id="CHEBI:16810"/>
        <dbReference type="ChEBI" id="CHEBI:28938"/>
        <dbReference type="EC" id="3.5.1.3"/>
    </reaction>
    <physiologicalReaction direction="left-to-right" evidence="1">
        <dbReference type="Rhea" id="RHEA:32964"/>
    </physiologicalReaction>
</comment>
<comment type="catalytic activity">
    <reaction evidence="1">
        <text>2-oxosuccinamate + H2O = oxaloacetate + NH4(+)</text>
        <dbReference type="Rhea" id="RHEA:59412"/>
        <dbReference type="ChEBI" id="CHEBI:15377"/>
        <dbReference type="ChEBI" id="CHEBI:16452"/>
        <dbReference type="ChEBI" id="CHEBI:28938"/>
        <dbReference type="ChEBI" id="CHEBI:57735"/>
        <dbReference type="EC" id="3.5.1.3"/>
    </reaction>
    <physiologicalReaction direction="left-to-right" evidence="1">
        <dbReference type="Rhea" id="RHEA:59413"/>
    </physiologicalReaction>
</comment>
<comment type="subunit">
    <text evidence="1">Homodimer.</text>
</comment>
<comment type="subcellular location">
    <subcellularLocation>
        <location evidence="1">Cytoplasm</location>
    </subcellularLocation>
</comment>
<comment type="similarity">
    <text evidence="3">Belongs to the carbon-nitrogen hydrolase superfamily. NIT1/NIT2 family.</text>
</comment>
<accession>Q6IR61</accession>
<feature type="chain" id="PRO_0000320258" description="Omega-amidase NIT2-A">
    <location>
        <begin position="1"/>
        <end position="276"/>
    </location>
</feature>
<feature type="domain" description="CN hydrolase" evidence="2">
    <location>
        <begin position="4"/>
        <end position="248"/>
    </location>
</feature>
<feature type="active site" description="Proton acceptor" evidence="2">
    <location>
        <position position="43"/>
    </location>
</feature>
<feature type="active site" description="Proton donor" evidence="2">
    <location>
        <position position="112"/>
    </location>
</feature>
<feature type="active site" description="Nucleophile" evidence="2">
    <location>
        <position position="153"/>
    </location>
</feature>
<proteinExistence type="evidence at transcript level"/>
<sequence length="276" mass="30738">MAKFKLSLVQFLVSPVKSDNLNRACKLIKEAAQKGAQIVALPECFNSPYGTTYFPEYAEKIPGESTELLSQVAKECGIYLIGGSIPEEDCGKLYNTCAVFGPDGTLLVKHRKIHLFDIDVPGKIRFQESETLSPGDSFSVFDTPYCKVGVGICYDIRFAELAQIYANKGCQLLVYPGAFNMTTGPAHWELLQRARALDNQVYVATASPARDEKASYVAWGHSTIVSPWGEVVAKAGSEETVLSAEIDLQYLAEIREQIPIRRQRRRDLYNVEEKRN</sequence>
<protein>
    <recommendedName>
        <fullName>Omega-amidase NIT2-A</fullName>
        <ecNumber evidence="1">3.5.1.3</ecNumber>
    </recommendedName>
    <alternativeName>
        <fullName>Nitrilase homolog 2</fullName>
    </alternativeName>
</protein>
<organism>
    <name type="scientific">Xenopus laevis</name>
    <name type="common">African clawed frog</name>
    <dbReference type="NCBI Taxonomy" id="8355"/>
    <lineage>
        <taxon>Eukaryota</taxon>
        <taxon>Metazoa</taxon>
        <taxon>Chordata</taxon>
        <taxon>Craniata</taxon>
        <taxon>Vertebrata</taxon>
        <taxon>Euteleostomi</taxon>
        <taxon>Amphibia</taxon>
        <taxon>Batrachia</taxon>
        <taxon>Anura</taxon>
        <taxon>Pipoidea</taxon>
        <taxon>Pipidae</taxon>
        <taxon>Xenopodinae</taxon>
        <taxon>Xenopus</taxon>
        <taxon>Xenopus</taxon>
    </lineage>
</organism>
<name>NIT2A_XENLA</name>
<keyword id="KW-0963">Cytoplasm</keyword>
<keyword id="KW-0378">Hydrolase</keyword>
<keyword id="KW-1185">Reference proteome</keyword>
<reference key="1">
    <citation type="submission" date="2004-05" db="EMBL/GenBank/DDBJ databases">
        <authorList>
            <consortium name="NIH - Xenopus Gene Collection (XGC) project"/>
        </authorList>
    </citation>
    <scope>NUCLEOTIDE SEQUENCE [LARGE SCALE MRNA]</scope>
    <source>
        <tissue>Kidney</tissue>
    </source>
</reference>